<sequence>MARYFRRRKFCRFTAEGVQEIDYKDIATLKNYITESGKIVPSRITGTRAKYQRQLARAIKRARYLSLLPYTDRHQ</sequence>
<proteinExistence type="inferred from homology"/>
<keyword id="KW-1185">Reference proteome</keyword>
<keyword id="KW-0687">Ribonucleoprotein</keyword>
<keyword id="KW-0689">Ribosomal protein</keyword>
<keyword id="KW-0694">RNA-binding</keyword>
<keyword id="KW-0699">rRNA-binding</keyword>
<comment type="function">
    <text evidence="1">Binds as a heterodimer with protein bS6 to the central domain of the 16S rRNA, where it helps stabilize the platform of the 30S subunit.</text>
</comment>
<comment type="subunit">
    <text evidence="1">Part of the 30S ribosomal subunit. Forms a tight heterodimer with protein bS6.</text>
</comment>
<comment type="similarity">
    <text evidence="1">Belongs to the bacterial ribosomal protein bS18 family.</text>
</comment>
<accession>B2TY75</accession>
<name>RS18_SHIB3</name>
<gene>
    <name evidence="1" type="primary">rpsR</name>
    <name type="ordered locus">SbBS512_E4735</name>
</gene>
<organism>
    <name type="scientific">Shigella boydii serotype 18 (strain CDC 3083-94 / BS512)</name>
    <dbReference type="NCBI Taxonomy" id="344609"/>
    <lineage>
        <taxon>Bacteria</taxon>
        <taxon>Pseudomonadati</taxon>
        <taxon>Pseudomonadota</taxon>
        <taxon>Gammaproteobacteria</taxon>
        <taxon>Enterobacterales</taxon>
        <taxon>Enterobacteriaceae</taxon>
        <taxon>Shigella</taxon>
    </lineage>
</organism>
<protein>
    <recommendedName>
        <fullName evidence="1">Small ribosomal subunit protein bS18</fullName>
    </recommendedName>
    <alternativeName>
        <fullName evidence="2">30S ribosomal protein S18</fullName>
    </alternativeName>
</protein>
<evidence type="ECO:0000255" key="1">
    <source>
        <dbReference type="HAMAP-Rule" id="MF_00270"/>
    </source>
</evidence>
<evidence type="ECO:0000305" key="2"/>
<dbReference type="EMBL" id="CP001063">
    <property type="protein sequence ID" value="ACD09064.1"/>
    <property type="molecule type" value="Genomic_DNA"/>
</dbReference>
<dbReference type="RefSeq" id="WP_000135199.1">
    <property type="nucleotide sequence ID" value="NC_010658.1"/>
</dbReference>
<dbReference type="SMR" id="B2TY75"/>
<dbReference type="STRING" id="344609.SbBS512_E4735"/>
<dbReference type="GeneID" id="98186237"/>
<dbReference type="KEGG" id="sbc:SbBS512_E4735"/>
<dbReference type="HOGENOM" id="CLU_148710_2_3_6"/>
<dbReference type="Proteomes" id="UP000001030">
    <property type="component" value="Chromosome"/>
</dbReference>
<dbReference type="GO" id="GO:0022627">
    <property type="term" value="C:cytosolic small ribosomal subunit"/>
    <property type="evidence" value="ECO:0007669"/>
    <property type="project" value="TreeGrafter"/>
</dbReference>
<dbReference type="GO" id="GO:0070181">
    <property type="term" value="F:small ribosomal subunit rRNA binding"/>
    <property type="evidence" value="ECO:0007669"/>
    <property type="project" value="TreeGrafter"/>
</dbReference>
<dbReference type="GO" id="GO:0003735">
    <property type="term" value="F:structural constituent of ribosome"/>
    <property type="evidence" value="ECO:0007669"/>
    <property type="project" value="InterPro"/>
</dbReference>
<dbReference type="GO" id="GO:0006412">
    <property type="term" value="P:translation"/>
    <property type="evidence" value="ECO:0007669"/>
    <property type="project" value="UniProtKB-UniRule"/>
</dbReference>
<dbReference type="FunFam" id="4.10.640.10:FF:000001">
    <property type="entry name" value="30S ribosomal protein S18"/>
    <property type="match status" value="1"/>
</dbReference>
<dbReference type="Gene3D" id="4.10.640.10">
    <property type="entry name" value="Ribosomal protein S18"/>
    <property type="match status" value="1"/>
</dbReference>
<dbReference type="HAMAP" id="MF_00270">
    <property type="entry name" value="Ribosomal_bS18"/>
    <property type="match status" value="1"/>
</dbReference>
<dbReference type="InterPro" id="IPR001648">
    <property type="entry name" value="Ribosomal_bS18"/>
</dbReference>
<dbReference type="InterPro" id="IPR018275">
    <property type="entry name" value="Ribosomal_bS18_CS"/>
</dbReference>
<dbReference type="InterPro" id="IPR036870">
    <property type="entry name" value="Ribosomal_bS18_sf"/>
</dbReference>
<dbReference type="NCBIfam" id="TIGR00165">
    <property type="entry name" value="S18"/>
    <property type="match status" value="1"/>
</dbReference>
<dbReference type="PANTHER" id="PTHR13479">
    <property type="entry name" value="30S RIBOSOMAL PROTEIN S18"/>
    <property type="match status" value="1"/>
</dbReference>
<dbReference type="PANTHER" id="PTHR13479:SF40">
    <property type="entry name" value="SMALL RIBOSOMAL SUBUNIT PROTEIN BS18M"/>
    <property type="match status" value="1"/>
</dbReference>
<dbReference type="Pfam" id="PF01084">
    <property type="entry name" value="Ribosomal_S18"/>
    <property type="match status" value="1"/>
</dbReference>
<dbReference type="PRINTS" id="PR00974">
    <property type="entry name" value="RIBOSOMALS18"/>
</dbReference>
<dbReference type="SUPFAM" id="SSF46911">
    <property type="entry name" value="Ribosomal protein S18"/>
    <property type="match status" value="1"/>
</dbReference>
<dbReference type="PROSITE" id="PS00057">
    <property type="entry name" value="RIBOSOMAL_S18"/>
    <property type="match status" value="1"/>
</dbReference>
<reference key="1">
    <citation type="submission" date="2008-05" db="EMBL/GenBank/DDBJ databases">
        <title>Complete sequence of Shigella boydii serotype 18 strain BS512.</title>
        <authorList>
            <person name="Rasko D.A."/>
            <person name="Rosovitz M."/>
            <person name="Maurelli A.T."/>
            <person name="Myers G."/>
            <person name="Seshadri R."/>
            <person name="Cer R."/>
            <person name="Jiang L."/>
            <person name="Ravel J."/>
            <person name="Sebastian Y."/>
        </authorList>
    </citation>
    <scope>NUCLEOTIDE SEQUENCE [LARGE SCALE GENOMIC DNA]</scope>
    <source>
        <strain>CDC 3083-94 / BS512</strain>
    </source>
</reference>
<feature type="chain" id="PRO_1000114452" description="Small ribosomal subunit protein bS18">
    <location>
        <begin position="1"/>
        <end position="75"/>
    </location>
</feature>